<comment type="function">
    <text evidence="1">One of the components of the core complex of photosystem II (PSII). PSII is a light-driven water:plastoquinone oxidoreductase that uses light energy to abstract electrons from H(2)O, generating O(2) and a proton gradient subsequently used for ATP formation. It consists of a core antenna complex that captures photons, and an electron transfer chain that converts photonic excitation into a charge separation.</text>
</comment>
<comment type="subunit">
    <text evidence="1">PSII is composed of 1 copy each of membrane proteins PsbA, PsbB, PsbC, PsbD, PsbE, PsbF, PsbH, PsbI, PsbJ, PsbK, PsbL, PsbM, PsbT, PsbX, PsbY, PsbZ, Psb30/Ycf12, at least 3 peripheral proteins of the oxygen-evolving complex and a large number of cofactors. It forms dimeric complexes.</text>
</comment>
<comment type="subcellular location">
    <subcellularLocation>
        <location evidence="1">Plastid</location>
        <location evidence="1">Chloroplast thylakoid membrane</location>
        <topology evidence="1">Single-pass membrane protein</topology>
    </subcellularLocation>
</comment>
<comment type="similarity">
    <text evidence="1">Belongs to the PsbK family.</text>
</comment>
<name>PSBK_MAIZE</name>
<protein>
    <recommendedName>
        <fullName evidence="1">Photosystem II reaction center protein K</fullName>
        <shortName evidence="1">PSII-K</shortName>
    </recommendedName>
</protein>
<accession>P48188</accession>
<dbReference type="EMBL" id="X86563">
    <property type="protein sequence ID" value="CAA60268.1"/>
    <property type="molecule type" value="Genomic_DNA"/>
</dbReference>
<dbReference type="PIR" id="S58534">
    <property type="entry name" value="S58534"/>
</dbReference>
<dbReference type="RefSeq" id="NP_043007.1">
    <property type="nucleotide sequence ID" value="NC_001666.2"/>
</dbReference>
<dbReference type="SMR" id="P48188"/>
<dbReference type="FunCoup" id="P48188">
    <property type="interactions" value="94"/>
</dbReference>
<dbReference type="STRING" id="4577.P48188"/>
<dbReference type="PaxDb" id="4577-GRMZM2G015355_P01"/>
<dbReference type="GeneID" id="845208"/>
<dbReference type="KEGG" id="zma:845208"/>
<dbReference type="MaizeGDB" id="118217"/>
<dbReference type="InParanoid" id="P48188"/>
<dbReference type="OrthoDB" id="1868502at2759"/>
<dbReference type="Proteomes" id="UP000007305">
    <property type="component" value="Chloroplast"/>
</dbReference>
<dbReference type="GO" id="GO:0009535">
    <property type="term" value="C:chloroplast thylakoid membrane"/>
    <property type="evidence" value="ECO:0007669"/>
    <property type="project" value="UniProtKB-SubCell"/>
</dbReference>
<dbReference type="GO" id="GO:0009539">
    <property type="term" value="C:photosystem II reaction center"/>
    <property type="evidence" value="ECO:0007669"/>
    <property type="project" value="InterPro"/>
</dbReference>
<dbReference type="GO" id="GO:0015979">
    <property type="term" value="P:photosynthesis"/>
    <property type="evidence" value="ECO:0007669"/>
    <property type="project" value="UniProtKB-UniRule"/>
</dbReference>
<dbReference type="HAMAP" id="MF_00441">
    <property type="entry name" value="PSII_PsbK"/>
    <property type="match status" value="1"/>
</dbReference>
<dbReference type="InterPro" id="IPR003687">
    <property type="entry name" value="PSII_PsbK"/>
</dbReference>
<dbReference type="InterPro" id="IPR037270">
    <property type="entry name" value="PSII_PsbK_sf"/>
</dbReference>
<dbReference type="NCBIfam" id="NF002715">
    <property type="entry name" value="PRK02553.1"/>
    <property type="match status" value="1"/>
</dbReference>
<dbReference type="PANTHER" id="PTHR35325">
    <property type="match status" value="1"/>
</dbReference>
<dbReference type="PANTHER" id="PTHR35325:SF1">
    <property type="entry name" value="PHOTOSYSTEM II REACTION CENTER PROTEIN K"/>
    <property type="match status" value="1"/>
</dbReference>
<dbReference type="Pfam" id="PF02533">
    <property type="entry name" value="PsbK"/>
    <property type="match status" value="1"/>
</dbReference>
<dbReference type="SUPFAM" id="SSF161037">
    <property type="entry name" value="Photosystem II reaction center protein K, PsbK"/>
    <property type="match status" value="1"/>
</dbReference>
<gene>
    <name evidence="1" type="primary">psbK</name>
</gene>
<geneLocation type="chloroplast"/>
<keyword id="KW-0150">Chloroplast</keyword>
<keyword id="KW-0472">Membrane</keyword>
<keyword id="KW-0602">Photosynthesis</keyword>
<keyword id="KW-0604">Photosystem II</keyword>
<keyword id="KW-0934">Plastid</keyword>
<keyword id="KW-0674">Reaction center</keyword>
<keyword id="KW-1185">Reference proteome</keyword>
<keyword id="KW-0793">Thylakoid</keyword>
<keyword id="KW-0812">Transmembrane</keyword>
<keyword id="KW-1133">Transmembrane helix</keyword>
<proteinExistence type="inferred from homology"/>
<organism>
    <name type="scientific">Zea mays</name>
    <name type="common">Maize</name>
    <dbReference type="NCBI Taxonomy" id="4577"/>
    <lineage>
        <taxon>Eukaryota</taxon>
        <taxon>Viridiplantae</taxon>
        <taxon>Streptophyta</taxon>
        <taxon>Embryophyta</taxon>
        <taxon>Tracheophyta</taxon>
        <taxon>Spermatophyta</taxon>
        <taxon>Magnoliopsida</taxon>
        <taxon>Liliopsida</taxon>
        <taxon>Poales</taxon>
        <taxon>Poaceae</taxon>
        <taxon>PACMAD clade</taxon>
        <taxon>Panicoideae</taxon>
        <taxon>Andropogonodae</taxon>
        <taxon>Andropogoneae</taxon>
        <taxon>Tripsacinae</taxon>
        <taxon>Zea</taxon>
    </lineage>
</organism>
<evidence type="ECO:0000255" key="1">
    <source>
        <dbReference type="HAMAP-Rule" id="MF_00441"/>
    </source>
</evidence>
<reference key="1">
    <citation type="journal article" date="1995" name="J. Mol. Biol.">
        <title>Complete sequence of the maize chloroplast genome: gene content, hotspots of divergence and fine tuning of genetic information by transcript editing.</title>
        <authorList>
            <person name="Maier R.M."/>
            <person name="Neckermann K."/>
            <person name="Igloi G.L."/>
            <person name="Koessel H."/>
        </authorList>
    </citation>
    <scope>NUCLEOTIDE SEQUENCE [LARGE SCALE GENOMIC DNA]</scope>
    <source>
        <strain>cv. B73</strain>
    </source>
</reference>
<sequence length="61" mass="6874">MPNILSLTCICFNSVLCPTSFFFAKLPEAYAIFNPIVDVMPVIPVLFFLLAFVWQAAVSFR</sequence>
<feature type="propeptide" id="PRO_0000029485" evidence="1">
    <location>
        <begin position="1"/>
        <end position="24"/>
    </location>
</feature>
<feature type="chain" id="PRO_0000029486" description="Photosystem II reaction center protein K" evidence="1">
    <location>
        <begin position="25"/>
        <end position="61"/>
    </location>
</feature>
<feature type="transmembrane region" description="Helical" evidence="1">
    <location>
        <begin position="32"/>
        <end position="52"/>
    </location>
</feature>